<accession>P31126</accession>
<accession>P31127</accession>
<accession>P76151</accession>
<sequence length="395" mass="42659">MNLSLRRSTSALLASSLLLTIGRGATLPFMTIYLSRQYSLSVDLIGYAMTIALTIGVVFSLGFGILADKFDKKRYMLLAITAFASGFIAITLVNNVTLVVLFFALINCAYSVFATVLKAWFADNLSSTSKTKIFSINYTMLNIGWTIGPPLGTLLVMQSINLPFWLAAICSAFPMLFIQIWVKRSEKIIATETGSVWSPKVLLQDKALLWFTCSGFLASFVSGAFASCISQYVMVIADGDFAEKVVAVVLPVNAAMVVTLQYSVGRRLNPANIRALMTAGTLCFVIGLVGFIFSGNSLLLWGMSAAVFTVGEIIYAPGEYMLIDHIAPPEMKASYFSAQSLGWLGAAINPLVSGVVLTSLPPSSLFVILALVIIAAWVLMLKGIRARPWGQPALC</sequence>
<feature type="chain" id="PRO_0000084896" description="Uncharacterized MFS-type transporter YdeE">
    <location>
        <begin position="1"/>
        <end position="395"/>
    </location>
</feature>
<feature type="transmembrane region" description="Helical" evidence="1">
    <location>
        <begin position="12"/>
        <end position="34"/>
    </location>
</feature>
<feature type="transmembrane region" description="Helical" evidence="1">
    <location>
        <begin position="44"/>
        <end position="66"/>
    </location>
</feature>
<feature type="transmembrane region" description="Helical" evidence="1">
    <location>
        <begin position="75"/>
        <end position="94"/>
    </location>
</feature>
<feature type="transmembrane region" description="Helical" evidence="1">
    <location>
        <begin position="99"/>
        <end position="121"/>
    </location>
</feature>
<feature type="transmembrane region" description="Helical" evidence="1">
    <location>
        <begin position="134"/>
        <end position="156"/>
    </location>
</feature>
<feature type="transmembrane region" description="Helical" evidence="1">
    <location>
        <begin position="160"/>
        <end position="182"/>
    </location>
</feature>
<feature type="transmembrane region" description="Helical" evidence="1">
    <location>
        <begin position="208"/>
        <end position="230"/>
    </location>
</feature>
<feature type="transmembrane region" description="Helical" evidence="1">
    <location>
        <begin position="245"/>
        <end position="264"/>
    </location>
</feature>
<feature type="transmembrane region" description="Helical" evidence="1">
    <location>
        <begin position="271"/>
        <end position="293"/>
    </location>
</feature>
<feature type="transmembrane region" description="Helical" evidence="1">
    <location>
        <begin position="298"/>
        <end position="320"/>
    </location>
</feature>
<feature type="transmembrane region" description="Helical" evidence="1">
    <location>
        <begin position="341"/>
        <end position="360"/>
    </location>
</feature>
<feature type="transmembrane region" description="Helical" evidence="1">
    <location>
        <begin position="364"/>
        <end position="381"/>
    </location>
</feature>
<feature type="sequence conflict" description="In Ref. 1; M96235." evidence="3" ref="1">
    <original>L</original>
    <variation>V</variation>
    <location>
        <position position="27"/>
    </location>
</feature>
<evidence type="ECO:0000255" key="1"/>
<evidence type="ECO:0000269" key="2">
    <source>
    </source>
</evidence>
<evidence type="ECO:0000305" key="3"/>
<proteinExistence type="inferred from homology"/>
<dbReference type="EMBL" id="M96235">
    <property type="status" value="NOT_ANNOTATED_CDS"/>
    <property type="molecule type" value="Genomic_DNA"/>
</dbReference>
<dbReference type="EMBL" id="U00096">
    <property type="protein sequence ID" value="AAC74607.1"/>
    <property type="molecule type" value="Genomic_DNA"/>
</dbReference>
<dbReference type="EMBL" id="AP009048">
    <property type="protein sequence ID" value="BAA15224.2"/>
    <property type="molecule type" value="Genomic_DNA"/>
</dbReference>
<dbReference type="PIR" id="A64908">
    <property type="entry name" value="A64908"/>
</dbReference>
<dbReference type="RefSeq" id="NP_416051.1">
    <property type="nucleotide sequence ID" value="NC_000913.3"/>
</dbReference>
<dbReference type="RefSeq" id="WP_001054204.1">
    <property type="nucleotide sequence ID" value="NZ_LN832404.1"/>
</dbReference>
<dbReference type="SMR" id="P31126"/>
<dbReference type="BioGRID" id="4259113">
    <property type="interactions" value="150"/>
</dbReference>
<dbReference type="FunCoup" id="P31126">
    <property type="interactions" value="48"/>
</dbReference>
<dbReference type="STRING" id="511145.b1534"/>
<dbReference type="TCDB" id="2.A.1.2.55">
    <property type="family name" value="the major facilitator superfamily (mfs)"/>
</dbReference>
<dbReference type="PaxDb" id="511145-b1534"/>
<dbReference type="EnsemblBacteria" id="AAC74607">
    <property type="protein sequence ID" value="AAC74607"/>
    <property type="gene ID" value="b1534"/>
</dbReference>
<dbReference type="GeneID" id="946083"/>
<dbReference type="KEGG" id="ecj:JW1527"/>
<dbReference type="KEGG" id="eco:b1534"/>
<dbReference type="KEGG" id="ecoc:C3026_08860"/>
<dbReference type="PATRIC" id="fig|1411691.4.peg.732"/>
<dbReference type="EchoBASE" id="EB1595"/>
<dbReference type="eggNOG" id="COG2814">
    <property type="taxonomic scope" value="Bacteria"/>
</dbReference>
<dbReference type="HOGENOM" id="CLU_001265_60_0_6"/>
<dbReference type="InParanoid" id="P31126"/>
<dbReference type="OMA" id="MTIYLTR"/>
<dbReference type="OrthoDB" id="3237211at2"/>
<dbReference type="PhylomeDB" id="P31126"/>
<dbReference type="BioCyc" id="EcoCyc:YDEF-MONOMER"/>
<dbReference type="PRO" id="PR:P31126"/>
<dbReference type="Proteomes" id="UP000000625">
    <property type="component" value="Chromosome"/>
</dbReference>
<dbReference type="GO" id="GO:0005886">
    <property type="term" value="C:plasma membrane"/>
    <property type="evidence" value="ECO:0000314"/>
    <property type="project" value="EcoCyc"/>
</dbReference>
<dbReference type="GO" id="GO:0071916">
    <property type="term" value="F:dipeptide transmembrane transporter activity"/>
    <property type="evidence" value="ECO:0000315"/>
    <property type="project" value="EcoCyc"/>
</dbReference>
<dbReference type="GO" id="GO:0035442">
    <property type="term" value="P:dipeptide transmembrane transport"/>
    <property type="evidence" value="ECO:0000315"/>
    <property type="project" value="EcoCyc"/>
</dbReference>
<dbReference type="GO" id="GO:0015031">
    <property type="term" value="P:protein transport"/>
    <property type="evidence" value="ECO:0007669"/>
    <property type="project" value="UniProtKB-KW"/>
</dbReference>
<dbReference type="CDD" id="cd17329">
    <property type="entry name" value="MFS_MdtH_MDR_like"/>
    <property type="match status" value="1"/>
</dbReference>
<dbReference type="FunFam" id="1.20.1250.20:FF:000262">
    <property type="entry name" value="Efflux MFS transporter YdeE"/>
    <property type="match status" value="1"/>
</dbReference>
<dbReference type="Gene3D" id="1.20.1250.20">
    <property type="entry name" value="MFS general substrate transporter like domains"/>
    <property type="match status" value="1"/>
</dbReference>
<dbReference type="InterPro" id="IPR011701">
    <property type="entry name" value="MFS"/>
</dbReference>
<dbReference type="InterPro" id="IPR020846">
    <property type="entry name" value="MFS_dom"/>
</dbReference>
<dbReference type="InterPro" id="IPR036259">
    <property type="entry name" value="MFS_trans_sf"/>
</dbReference>
<dbReference type="NCBIfam" id="NF007472">
    <property type="entry name" value="PRK10054.1"/>
    <property type="match status" value="1"/>
</dbReference>
<dbReference type="PANTHER" id="PTHR23535:SF1">
    <property type="entry name" value="MFS FAMILY TRANSPORT PROTEIN"/>
    <property type="match status" value="1"/>
</dbReference>
<dbReference type="PANTHER" id="PTHR23535">
    <property type="entry name" value="SUGAR EFFLUX TRANSPORTER A-RELATED"/>
    <property type="match status" value="1"/>
</dbReference>
<dbReference type="Pfam" id="PF07690">
    <property type="entry name" value="MFS_1"/>
    <property type="match status" value="1"/>
</dbReference>
<dbReference type="SUPFAM" id="SSF103473">
    <property type="entry name" value="MFS general substrate transporter"/>
    <property type="match status" value="1"/>
</dbReference>
<dbReference type="PROSITE" id="PS50850">
    <property type="entry name" value="MFS"/>
    <property type="match status" value="1"/>
</dbReference>
<comment type="function">
    <text evidence="2">A transporter able to export peptides. When overexpressed, allows cells deleted for multiple peptidases (pepA, pepB, pepD and pepN) to grow in the presence of dipeptides Ala-Gln or Gly-Tyr which otherwise inhibit growth (PubMed:20067529). Cells overexpressing this protein have decreased intracellular levels of Ala-Gln dipeptide, and in a system that produces the Ala-Gln dipeptide overproduction of this protein increases export of the dipeptide (PubMed:20067529).</text>
</comment>
<comment type="subcellular location">
    <subcellularLocation>
        <location evidence="3">Cell inner membrane</location>
        <topology evidence="3">Multi-pass membrane protein</topology>
    </subcellularLocation>
</comment>
<comment type="similarity">
    <text evidence="3">Belongs to the major facilitator superfamily.</text>
</comment>
<comment type="sequence caution" evidence="3">
    <conflict type="frameshift">
        <sequence resource="EMBL" id="M96235"/>
    </conflict>
    <text>Produces two separate ORFS.</text>
</comment>
<name>YDEE_ECOLI</name>
<protein>
    <recommendedName>
        <fullName>Uncharacterized MFS-type transporter YdeE</fullName>
    </recommendedName>
</protein>
<gene>
    <name type="primary">ydeE</name>
    <name type="synonym">ydeF</name>
    <name type="ordered locus">b1534</name>
    <name type="ordered locus">JW1527</name>
</gene>
<organism>
    <name type="scientific">Escherichia coli (strain K12)</name>
    <dbReference type="NCBI Taxonomy" id="83333"/>
    <lineage>
        <taxon>Bacteria</taxon>
        <taxon>Pseudomonadati</taxon>
        <taxon>Pseudomonadota</taxon>
        <taxon>Gammaproteobacteria</taxon>
        <taxon>Enterobacterales</taxon>
        <taxon>Enterobacteriaceae</taxon>
        <taxon>Escherichia</taxon>
    </lineage>
</organism>
<keyword id="KW-0997">Cell inner membrane</keyword>
<keyword id="KW-1003">Cell membrane</keyword>
<keyword id="KW-0472">Membrane</keyword>
<keyword id="KW-0571">Peptide transport</keyword>
<keyword id="KW-0653">Protein transport</keyword>
<keyword id="KW-1185">Reference proteome</keyword>
<keyword id="KW-0812">Transmembrane</keyword>
<keyword id="KW-1133">Transmembrane helix</keyword>
<keyword id="KW-0813">Transport</keyword>
<reference key="1">
    <citation type="journal article" date="1993" name="J. Bacteriol.">
        <title>Genetic and functional analysis of the multiple antibiotic resistance (mar) locus in Escherichia coli.</title>
        <authorList>
            <person name="Cohen S.P."/>
            <person name="Haechler H."/>
            <person name="Levy S.B."/>
        </authorList>
    </citation>
    <scope>NUCLEOTIDE SEQUENCE [GENOMIC DNA]</scope>
</reference>
<reference key="2">
    <citation type="journal article" date="1996" name="DNA Res.">
        <title>A 570-kb DNA sequence of the Escherichia coli K-12 genome corresponding to the 28.0-40.1 min region on the linkage map.</title>
        <authorList>
            <person name="Aiba H."/>
            <person name="Baba T."/>
            <person name="Fujita K."/>
            <person name="Hayashi K."/>
            <person name="Inada T."/>
            <person name="Isono K."/>
            <person name="Itoh T."/>
            <person name="Kasai H."/>
            <person name="Kashimoto K."/>
            <person name="Kimura S."/>
            <person name="Kitakawa M."/>
            <person name="Kitagawa M."/>
            <person name="Makino K."/>
            <person name="Miki T."/>
            <person name="Mizobuchi K."/>
            <person name="Mori H."/>
            <person name="Mori T."/>
            <person name="Motomura K."/>
            <person name="Nakade S."/>
            <person name="Nakamura Y."/>
            <person name="Nashimoto H."/>
            <person name="Nishio Y."/>
            <person name="Oshima T."/>
            <person name="Saito N."/>
            <person name="Sampei G."/>
            <person name="Seki Y."/>
            <person name="Sivasundaram S."/>
            <person name="Tagami H."/>
            <person name="Takeda J."/>
            <person name="Takemoto K."/>
            <person name="Takeuchi Y."/>
            <person name="Wada C."/>
            <person name="Yamamoto Y."/>
            <person name="Horiuchi T."/>
        </authorList>
    </citation>
    <scope>NUCLEOTIDE SEQUENCE [LARGE SCALE GENOMIC DNA]</scope>
    <source>
        <strain>K12 / W3110 / ATCC 27325 / DSM 5911</strain>
    </source>
</reference>
<reference key="3">
    <citation type="journal article" date="1997" name="Science">
        <title>The complete genome sequence of Escherichia coli K-12.</title>
        <authorList>
            <person name="Blattner F.R."/>
            <person name="Plunkett G. III"/>
            <person name="Bloch C.A."/>
            <person name="Perna N.T."/>
            <person name="Burland V."/>
            <person name="Riley M."/>
            <person name="Collado-Vides J."/>
            <person name="Glasner J.D."/>
            <person name="Rode C.K."/>
            <person name="Mayhew G.F."/>
            <person name="Gregor J."/>
            <person name="Davis N.W."/>
            <person name="Kirkpatrick H.A."/>
            <person name="Goeden M.A."/>
            <person name="Rose D.J."/>
            <person name="Mau B."/>
            <person name="Shao Y."/>
        </authorList>
    </citation>
    <scope>NUCLEOTIDE SEQUENCE [LARGE SCALE GENOMIC DNA]</scope>
    <source>
        <strain>K12 / MG1655 / ATCC 47076</strain>
    </source>
</reference>
<reference key="4">
    <citation type="journal article" date="2006" name="Mol. Syst. Biol.">
        <title>Highly accurate genome sequences of Escherichia coli K-12 strains MG1655 and W3110.</title>
        <authorList>
            <person name="Hayashi K."/>
            <person name="Morooka N."/>
            <person name="Yamamoto Y."/>
            <person name="Fujita K."/>
            <person name="Isono K."/>
            <person name="Choi S."/>
            <person name="Ohtsubo E."/>
            <person name="Baba T."/>
            <person name="Wanner B.L."/>
            <person name="Mori H."/>
            <person name="Horiuchi T."/>
        </authorList>
    </citation>
    <scope>NUCLEOTIDE SEQUENCE [LARGE SCALE GENOMIC DNA]</scope>
    <source>
        <strain>K12 / W3110 / ATCC 27325 / DSM 5911</strain>
    </source>
</reference>
<reference key="5">
    <citation type="journal article" date="2010" name="FEMS Microbiol. Lett.">
        <title>Effect of multidrug-efflux transporter genes on dipeptide resistance and overproduction in Escherichia coli.</title>
        <authorList>
            <person name="Hayashi M."/>
            <person name="Tabata K."/>
            <person name="Yagasaki M."/>
            <person name="Yonetani Y."/>
        </authorList>
    </citation>
    <scope>FUNCTION</scope>
    <source>
        <strain>K12 / JM101 / ATCC 33876 / DSM 3948 / NCIMB 11926</strain>
    </source>
</reference>